<dbReference type="EC" id="3.8.1.3"/>
<dbReference type="EMBL" id="D90423">
    <property type="protein sequence ID" value="BAA14413.1"/>
    <property type="molecule type" value="Genomic_DNA"/>
</dbReference>
<dbReference type="SMR" id="Q01399"/>
<dbReference type="GO" id="GO:0018785">
    <property type="term" value="F:haloacetate dehalogenase activity"/>
    <property type="evidence" value="ECO:0007669"/>
    <property type="project" value="UniProtKB-EC"/>
</dbReference>
<dbReference type="CDD" id="cd02588">
    <property type="entry name" value="HAD_L2-DEX"/>
    <property type="match status" value="1"/>
</dbReference>
<dbReference type="Gene3D" id="3.40.50.1000">
    <property type="entry name" value="HAD superfamily/HAD-like"/>
    <property type="match status" value="1"/>
</dbReference>
<dbReference type="Gene3D" id="1.10.150.240">
    <property type="entry name" value="Putative phosphatase, domain 2"/>
    <property type="match status" value="1"/>
</dbReference>
<dbReference type="InterPro" id="IPR006328">
    <property type="entry name" value="2-HAD"/>
</dbReference>
<dbReference type="InterPro" id="IPR036412">
    <property type="entry name" value="HAD-like_sf"/>
</dbReference>
<dbReference type="InterPro" id="IPR006439">
    <property type="entry name" value="HAD-SF_hydro_IA"/>
</dbReference>
<dbReference type="InterPro" id="IPR023214">
    <property type="entry name" value="HAD_sf"/>
</dbReference>
<dbReference type="InterPro" id="IPR023198">
    <property type="entry name" value="PGP-like_dom2"/>
</dbReference>
<dbReference type="InterPro" id="IPR051540">
    <property type="entry name" value="S-2-haloacid_dehalogenase"/>
</dbReference>
<dbReference type="NCBIfam" id="TIGR01493">
    <property type="entry name" value="HAD-SF-IA-v2"/>
    <property type="match status" value="1"/>
</dbReference>
<dbReference type="NCBIfam" id="TIGR01509">
    <property type="entry name" value="HAD-SF-IA-v3"/>
    <property type="match status" value="1"/>
</dbReference>
<dbReference type="NCBIfam" id="TIGR01428">
    <property type="entry name" value="HAD_type_II"/>
    <property type="match status" value="1"/>
</dbReference>
<dbReference type="PANTHER" id="PTHR43316:SF3">
    <property type="entry name" value="HALOACID DEHALOGENASE, TYPE II (AFU_ORTHOLOGUE AFUA_2G07750)-RELATED"/>
    <property type="match status" value="1"/>
</dbReference>
<dbReference type="PANTHER" id="PTHR43316">
    <property type="entry name" value="HYDROLASE, HALOACID DELAHOGENASE-RELATED"/>
    <property type="match status" value="1"/>
</dbReference>
<dbReference type="Pfam" id="PF00702">
    <property type="entry name" value="Hydrolase"/>
    <property type="match status" value="1"/>
</dbReference>
<dbReference type="PRINTS" id="PR00413">
    <property type="entry name" value="HADHALOGNASE"/>
</dbReference>
<dbReference type="SFLD" id="SFLDF00045">
    <property type="entry name" value="2-haloacid_dehalogenase"/>
    <property type="match status" value="1"/>
</dbReference>
<dbReference type="SFLD" id="SFLDS00003">
    <property type="entry name" value="Haloacid_Dehalogenase"/>
    <property type="match status" value="1"/>
</dbReference>
<dbReference type="SUPFAM" id="SSF56784">
    <property type="entry name" value="HAD-like"/>
    <property type="match status" value="1"/>
</dbReference>
<geneLocation type="plasmid">
    <name>POU1</name>
</geneLocation>
<name>DEH2_MORSB</name>
<evidence type="ECO:0000250" key="1"/>
<evidence type="ECO:0000305" key="2"/>
<proteinExistence type="evidence at protein level"/>
<sequence>MKKIEAIAFDMYGTLYDVHSVVDACEKQYPGKGKDISVLWRQKQLEYAWLRCLMGQYIKFEEATANALTYTCNQMKLDCDEGSAMRLTEEYLRLKPFPEVRGALRALRQRGMRLAILSNGSTETIHDVVHNSGVEGEFEHLISVDSARAYKPHPLAYELGEEAFGISRESILFVSSNPWDVSGAKAFGYQVCWINRYGFAFDELGQTPDFTVPVMDAIVHLIAV</sequence>
<organism>
    <name type="scientific">Moraxella sp. (strain B)</name>
    <dbReference type="NCBI Taxonomy" id="118147"/>
    <lineage>
        <taxon>Bacteria</taxon>
        <taxon>Pseudomonadati</taxon>
        <taxon>Pseudomonadota</taxon>
        <taxon>Gammaproteobacteria</taxon>
        <taxon>Moraxellales</taxon>
        <taxon>Moraxellaceae</taxon>
        <taxon>Moraxella</taxon>
    </lineage>
</organism>
<keyword id="KW-0903">Direct protein sequencing</keyword>
<keyword id="KW-0378">Hydrolase</keyword>
<keyword id="KW-0614">Plasmid</keyword>
<reference key="1">
    <citation type="journal article" date="1992" name="J. Gen. Microbiol.">
        <title>Lack of homology between two haloacetate dehalogenase genes encoded on a plasmid from Moraxella sp. strain B.</title>
        <authorList>
            <person name="Kawasaki H."/>
            <person name="Tsuda K."/>
            <person name="Matsushita I."/>
            <person name="Tonomura K."/>
        </authorList>
    </citation>
    <scope>NUCLEOTIDE SEQUENCE [GENOMIC DNA]</scope>
    <scope>PROTEIN SEQUENCE OF 1-10</scope>
</reference>
<protein>
    <recommendedName>
        <fullName>Haloacetate dehalogenase H-2</fullName>
        <ecNumber>3.8.1.3</ecNumber>
    </recommendedName>
</protein>
<feature type="chain" id="PRO_0000079167" description="Haloacetate dehalogenase H-2">
    <location>
        <begin position="1"/>
        <end position="224"/>
    </location>
</feature>
<feature type="active site" description="Nucleophile" evidence="1">
    <location>
        <position position="10"/>
    </location>
</feature>
<comment type="catalytic activity">
    <reaction>
        <text>a haloacetate + H2O = a halide anion + glycolate + H(+)</text>
        <dbReference type="Rhea" id="RHEA:11044"/>
        <dbReference type="ChEBI" id="CHEBI:15377"/>
        <dbReference type="ChEBI" id="CHEBI:15378"/>
        <dbReference type="ChEBI" id="CHEBI:16042"/>
        <dbReference type="ChEBI" id="CHEBI:29805"/>
        <dbReference type="ChEBI" id="CHEBI:85638"/>
        <dbReference type="EC" id="3.8.1.3"/>
    </reaction>
</comment>
<comment type="miscellaneous">
    <text>Two haloacetate dehalogenase enzymes exist in Moraxella strain B. DehH1 acts predominantly on fluoroacetate, dehH2 acts on chloro-, bromo- and iodoacetate, but not on fluoroacetate.</text>
</comment>
<comment type="similarity">
    <text evidence="2">Belongs to the HAD-like hydrolase superfamily. S-2-haloalkanoic acid dehalogenase family.</text>
</comment>
<accession>Q01399</accession>
<gene>
    <name type="primary">dehH2</name>
</gene>